<comment type="function">
    <text evidence="1">Negative regulator of class I heat shock genes (grpE-dnaK-dnaJ and groELS operons). Prevents heat-shock induction of these operons.</text>
</comment>
<comment type="similarity">
    <text evidence="1">Belongs to the HrcA family.</text>
</comment>
<comment type="sequence caution" evidence="2">
    <conflict type="erroneous initiation">
        <sequence resource="EMBL-CDS" id="AAF85141"/>
    </conflict>
</comment>
<reference key="1">
    <citation type="journal article" date="2000" name="Nature">
        <title>The genome sequence of the plant pathogen Xylella fastidiosa.</title>
        <authorList>
            <person name="Simpson A.J.G."/>
            <person name="Reinach F.C."/>
            <person name="Arruda P."/>
            <person name="Abreu F.A."/>
            <person name="Acencio M."/>
            <person name="Alvarenga R."/>
            <person name="Alves L.M.C."/>
            <person name="Araya J.E."/>
            <person name="Baia G.S."/>
            <person name="Baptista C.S."/>
            <person name="Barros M.H."/>
            <person name="Bonaccorsi E.D."/>
            <person name="Bordin S."/>
            <person name="Bove J.M."/>
            <person name="Briones M.R.S."/>
            <person name="Bueno M.R.P."/>
            <person name="Camargo A.A."/>
            <person name="Camargo L.E.A."/>
            <person name="Carraro D.M."/>
            <person name="Carrer H."/>
            <person name="Colauto N.B."/>
            <person name="Colombo C."/>
            <person name="Costa F.F."/>
            <person name="Costa M.C.R."/>
            <person name="Costa-Neto C.M."/>
            <person name="Coutinho L.L."/>
            <person name="Cristofani M."/>
            <person name="Dias-Neto E."/>
            <person name="Docena C."/>
            <person name="El-Dorry H."/>
            <person name="Facincani A.P."/>
            <person name="Ferreira A.J.S."/>
            <person name="Ferreira V.C.A."/>
            <person name="Ferro J.A."/>
            <person name="Fraga J.S."/>
            <person name="Franca S.C."/>
            <person name="Franco M.C."/>
            <person name="Frohme M."/>
            <person name="Furlan L.R."/>
            <person name="Garnier M."/>
            <person name="Goldman G.H."/>
            <person name="Goldman M.H.S."/>
            <person name="Gomes S.L."/>
            <person name="Gruber A."/>
            <person name="Ho P.L."/>
            <person name="Hoheisel J.D."/>
            <person name="Junqueira M.L."/>
            <person name="Kemper E.L."/>
            <person name="Kitajima J.P."/>
            <person name="Krieger J.E."/>
            <person name="Kuramae E.E."/>
            <person name="Laigret F."/>
            <person name="Lambais M.R."/>
            <person name="Leite L.C.C."/>
            <person name="Lemos E.G.M."/>
            <person name="Lemos M.V.F."/>
            <person name="Lopes S.A."/>
            <person name="Lopes C.R."/>
            <person name="Machado J.A."/>
            <person name="Machado M.A."/>
            <person name="Madeira A.M.B.N."/>
            <person name="Madeira H.M.F."/>
            <person name="Marino C.L."/>
            <person name="Marques M.V."/>
            <person name="Martins E.A.L."/>
            <person name="Martins E.M.F."/>
            <person name="Matsukuma A.Y."/>
            <person name="Menck C.F.M."/>
            <person name="Miracca E.C."/>
            <person name="Miyaki C.Y."/>
            <person name="Monteiro-Vitorello C.B."/>
            <person name="Moon D.H."/>
            <person name="Nagai M.A."/>
            <person name="Nascimento A.L.T.O."/>
            <person name="Netto L.E.S."/>
            <person name="Nhani A. Jr."/>
            <person name="Nobrega F.G."/>
            <person name="Nunes L.R."/>
            <person name="Oliveira M.A."/>
            <person name="de Oliveira M.C."/>
            <person name="de Oliveira R.C."/>
            <person name="Palmieri D.A."/>
            <person name="Paris A."/>
            <person name="Peixoto B.R."/>
            <person name="Pereira G.A.G."/>
            <person name="Pereira H.A. Jr."/>
            <person name="Pesquero J.B."/>
            <person name="Quaggio R.B."/>
            <person name="Roberto P.G."/>
            <person name="Rodrigues V."/>
            <person name="de Rosa A.J.M."/>
            <person name="de Rosa V.E. Jr."/>
            <person name="de Sa R.G."/>
            <person name="Santelli R.V."/>
            <person name="Sawasaki H.E."/>
            <person name="da Silva A.C.R."/>
            <person name="da Silva A.M."/>
            <person name="da Silva F.R."/>
            <person name="Silva W.A. Jr."/>
            <person name="da Silveira J.F."/>
            <person name="Silvestri M.L.Z."/>
            <person name="Siqueira W.J."/>
            <person name="de Souza A.A."/>
            <person name="de Souza A.P."/>
            <person name="Terenzi M.F."/>
            <person name="Truffi D."/>
            <person name="Tsai S.M."/>
            <person name="Tsuhako M.H."/>
            <person name="Vallada H."/>
            <person name="Van Sluys M.A."/>
            <person name="Verjovski-Almeida S."/>
            <person name="Vettore A.L."/>
            <person name="Zago M.A."/>
            <person name="Zatz M."/>
            <person name="Meidanis J."/>
            <person name="Setubal J.C."/>
        </authorList>
    </citation>
    <scope>NUCLEOTIDE SEQUENCE [LARGE SCALE GENOMIC DNA]</scope>
    <source>
        <strain>9a5c</strain>
    </source>
</reference>
<feature type="chain" id="PRO_0000182557" description="Heat-inducible transcription repressor HrcA">
    <location>
        <begin position="1"/>
        <end position="349"/>
    </location>
</feature>
<protein>
    <recommendedName>
        <fullName evidence="1">Heat-inducible transcription repressor HrcA</fullName>
    </recommendedName>
</protein>
<name>HRCA_XYLFA</name>
<dbReference type="EMBL" id="AE003849">
    <property type="protein sequence ID" value="AAF85141.1"/>
    <property type="status" value="ALT_INIT"/>
    <property type="molecule type" value="Genomic_DNA"/>
</dbReference>
<dbReference type="PIR" id="A82571">
    <property type="entry name" value="A82571"/>
</dbReference>
<dbReference type="RefSeq" id="WP_004085848.1">
    <property type="nucleotide sequence ID" value="NC_002488.3"/>
</dbReference>
<dbReference type="SMR" id="Q9PB03"/>
<dbReference type="STRING" id="160492.XF_2342"/>
<dbReference type="KEGG" id="xfa:XF_2342"/>
<dbReference type="eggNOG" id="COG1420">
    <property type="taxonomic scope" value="Bacteria"/>
</dbReference>
<dbReference type="HOGENOM" id="CLU_050019_0_0_6"/>
<dbReference type="Proteomes" id="UP000000812">
    <property type="component" value="Chromosome"/>
</dbReference>
<dbReference type="GO" id="GO:0003677">
    <property type="term" value="F:DNA binding"/>
    <property type="evidence" value="ECO:0007669"/>
    <property type="project" value="InterPro"/>
</dbReference>
<dbReference type="GO" id="GO:0045892">
    <property type="term" value="P:negative regulation of DNA-templated transcription"/>
    <property type="evidence" value="ECO:0007669"/>
    <property type="project" value="UniProtKB-UniRule"/>
</dbReference>
<dbReference type="Gene3D" id="3.30.450.40">
    <property type="match status" value="1"/>
</dbReference>
<dbReference type="Gene3D" id="3.30.390.60">
    <property type="entry name" value="Heat-inducible transcription repressor hrca homolog, domain 3"/>
    <property type="match status" value="1"/>
</dbReference>
<dbReference type="Gene3D" id="1.10.10.10">
    <property type="entry name" value="Winged helix-like DNA-binding domain superfamily/Winged helix DNA-binding domain"/>
    <property type="match status" value="1"/>
</dbReference>
<dbReference type="HAMAP" id="MF_00081">
    <property type="entry name" value="HrcA"/>
    <property type="match status" value="1"/>
</dbReference>
<dbReference type="InterPro" id="IPR029016">
    <property type="entry name" value="GAF-like_dom_sf"/>
</dbReference>
<dbReference type="InterPro" id="IPR002571">
    <property type="entry name" value="HrcA"/>
</dbReference>
<dbReference type="InterPro" id="IPR021153">
    <property type="entry name" value="HrcA_C"/>
</dbReference>
<dbReference type="InterPro" id="IPR036388">
    <property type="entry name" value="WH-like_DNA-bd_sf"/>
</dbReference>
<dbReference type="InterPro" id="IPR036390">
    <property type="entry name" value="WH_DNA-bd_sf"/>
</dbReference>
<dbReference type="InterPro" id="IPR005104">
    <property type="entry name" value="WHTH_HrcA_DNA-bd"/>
</dbReference>
<dbReference type="InterPro" id="IPR023120">
    <property type="entry name" value="WHTH_transcript_rep_HrcA_IDD"/>
</dbReference>
<dbReference type="NCBIfam" id="TIGR00331">
    <property type="entry name" value="hrcA"/>
    <property type="match status" value="1"/>
</dbReference>
<dbReference type="PANTHER" id="PTHR34824">
    <property type="entry name" value="HEAT-INDUCIBLE TRANSCRIPTION REPRESSOR HRCA"/>
    <property type="match status" value="1"/>
</dbReference>
<dbReference type="PANTHER" id="PTHR34824:SF1">
    <property type="entry name" value="HEAT-INDUCIBLE TRANSCRIPTION REPRESSOR HRCA"/>
    <property type="match status" value="1"/>
</dbReference>
<dbReference type="Pfam" id="PF01628">
    <property type="entry name" value="HrcA"/>
    <property type="match status" value="1"/>
</dbReference>
<dbReference type="Pfam" id="PF03444">
    <property type="entry name" value="HrcA_DNA-bdg"/>
    <property type="match status" value="1"/>
</dbReference>
<dbReference type="PIRSF" id="PIRSF005485">
    <property type="entry name" value="HrcA"/>
    <property type="match status" value="1"/>
</dbReference>
<dbReference type="SUPFAM" id="SSF55781">
    <property type="entry name" value="GAF domain-like"/>
    <property type="match status" value="1"/>
</dbReference>
<dbReference type="SUPFAM" id="SSF46785">
    <property type="entry name" value="Winged helix' DNA-binding domain"/>
    <property type="match status" value="1"/>
</dbReference>
<gene>
    <name evidence="1" type="primary">hrcA</name>
    <name type="ordered locus">XF_2342</name>
</gene>
<organism>
    <name type="scientific">Xylella fastidiosa (strain 9a5c)</name>
    <dbReference type="NCBI Taxonomy" id="160492"/>
    <lineage>
        <taxon>Bacteria</taxon>
        <taxon>Pseudomonadati</taxon>
        <taxon>Pseudomonadota</taxon>
        <taxon>Gammaproteobacteria</taxon>
        <taxon>Lysobacterales</taxon>
        <taxon>Lysobacteraceae</taxon>
        <taxon>Xylella</taxon>
    </lineage>
</organism>
<evidence type="ECO:0000255" key="1">
    <source>
        <dbReference type="HAMAP-Rule" id="MF_00081"/>
    </source>
</evidence>
<evidence type="ECO:0000305" key="2"/>
<proteinExistence type="inferred from homology"/>
<sequence>MCASFSPTLDSRSRQLLRTLISCYIQNGEPVGSKTLAQQAGLDISPATIRNILADLEELGLLNSPHTSAGRVPTAHGYRMFVDSLVQMQPPSEDDIRRLRVEMAGGGTQALLGNASEILSAMTHFVGVVSAPRREQFVFRHIDFVPLDARQIMAILIFADNEVQNRVIEPRRVYEPGELERVSNYLNAHFIGRTLADIRTTVLCELRKAKDEMEQLLAHSLDLASQMLVPNDSEDIVVTGQTRLMALQDLSDMDRLRELFEIFASKREILQLLERTINAPGVRIFIGEETGMVSMEDISLVTAPYAAHGQVLGVLGVIGPKRMAYDRVIPLVQVVAQVLGTALEPPTMP</sequence>
<accession>Q9PB03</accession>
<keyword id="KW-0678">Repressor</keyword>
<keyword id="KW-0346">Stress response</keyword>
<keyword id="KW-0804">Transcription</keyword>
<keyword id="KW-0805">Transcription regulation</keyword>